<protein>
    <recommendedName>
        <fullName>DNA-directed RNA polymerase III subunit RPC7-like</fullName>
        <shortName>RNA polymerase III subunit C7-like</shortName>
    </recommendedName>
    <alternativeName>
        <fullName>DNA-directed RNA polymerase III subunit G-like</fullName>
    </alternativeName>
</protein>
<organism>
    <name type="scientific">Mus musculus</name>
    <name type="common">Mouse</name>
    <dbReference type="NCBI Taxonomy" id="10090"/>
    <lineage>
        <taxon>Eukaryota</taxon>
        <taxon>Metazoa</taxon>
        <taxon>Chordata</taxon>
        <taxon>Craniata</taxon>
        <taxon>Vertebrata</taxon>
        <taxon>Euteleostomi</taxon>
        <taxon>Mammalia</taxon>
        <taxon>Eutheria</taxon>
        <taxon>Euarchontoglires</taxon>
        <taxon>Glires</taxon>
        <taxon>Rodentia</taxon>
        <taxon>Myomorpha</taxon>
        <taxon>Muroidea</taxon>
        <taxon>Muridae</taxon>
        <taxon>Murinae</taxon>
        <taxon>Mus</taxon>
        <taxon>Mus</taxon>
    </lineage>
</organism>
<comment type="function">
    <text evidence="2">DNA-dependent RNA polymerase catalyzes the transcription of DNA into RNA using the four ribonucleoside triphosphates as substrates. Specific peripheric component of RNA polymerase III which synthesizes small RNAs, such as 5S rRNA and tRNAs.</text>
</comment>
<comment type="subunit">
    <text evidence="1 2">Component of the RNA polymerase III (Pol III) complex consisting of 17 subunits (By similarity). Pol III exists as two alternative complexes defined by the mutually exclusive incorporation of subunit POLR3G/RPC7alpha or POLR3GL/RPC7beta. Found in a trimeric complex with POLR3C/RPC3 and POLR3F/RPC6. Directly interacts with POLR3C (By similarity).</text>
</comment>
<comment type="subcellular location">
    <subcellularLocation>
        <location evidence="2">Nucleus</location>
    </subcellularLocation>
</comment>
<comment type="tissue specificity">
    <text evidence="4">Expressed in the liver.</text>
</comment>
<comment type="similarity">
    <text evidence="5">Belongs to the eukaryotic RPC7 RNA polymerase subunit family.</text>
</comment>
<comment type="sequence caution" evidence="5">
    <conflict type="frameshift">
        <sequence resource="EMBL-CDS" id="AAH27083"/>
    </conflict>
</comment>
<dbReference type="EMBL" id="AK008069">
    <property type="protein sequence ID" value="BAB25439.1"/>
    <property type="molecule type" value="mRNA"/>
</dbReference>
<dbReference type="EMBL" id="BC027083">
    <property type="protein sequence ID" value="AAH27083.1"/>
    <property type="status" value="ALT_FRAME"/>
    <property type="molecule type" value="mRNA"/>
</dbReference>
<dbReference type="CCDS" id="CCDS17641.1"/>
<dbReference type="RefSeq" id="NP_081517.2">
    <property type="nucleotide sequence ID" value="NM_027241.4"/>
</dbReference>
<dbReference type="RefSeq" id="XP_030108671.1">
    <property type="nucleotide sequence ID" value="XM_030252811.2"/>
</dbReference>
<dbReference type="SMR" id="Q8R0C0"/>
<dbReference type="FunCoup" id="Q8R0C0">
    <property type="interactions" value="1432"/>
</dbReference>
<dbReference type="STRING" id="10090.ENSMUSP00000089544"/>
<dbReference type="iPTMnet" id="Q8R0C0"/>
<dbReference type="PhosphoSitePlus" id="Q8R0C0"/>
<dbReference type="jPOST" id="Q8R0C0"/>
<dbReference type="PaxDb" id="10090-ENSMUSP00000089544"/>
<dbReference type="ProteomicsDB" id="299868"/>
<dbReference type="Pumba" id="Q8R0C0"/>
<dbReference type="DNASU" id="69870"/>
<dbReference type="Ensembl" id="ENSMUST00000091924.10">
    <property type="protein sequence ID" value="ENSMUSP00000089544.4"/>
    <property type="gene ID" value="ENSMUSG00000028104.15"/>
</dbReference>
<dbReference type="GeneID" id="69870"/>
<dbReference type="KEGG" id="mmu:69870"/>
<dbReference type="UCSC" id="uc008qnf.3">
    <property type="organism name" value="mouse"/>
</dbReference>
<dbReference type="AGR" id="MGI:1917120"/>
<dbReference type="CTD" id="84265"/>
<dbReference type="MGI" id="MGI:1917120">
    <property type="gene designation" value="Polr3gl"/>
</dbReference>
<dbReference type="VEuPathDB" id="HostDB:ENSMUSG00000028104"/>
<dbReference type="eggNOG" id="ENOG502QUPX">
    <property type="taxonomic scope" value="Eukaryota"/>
</dbReference>
<dbReference type="GeneTree" id="ENSGT01120000272285"/>
<dbReference type="HOGENOM" id="CLU_084309_0_0_1"/>
<dbReference type="InParanoid" id="Q8R0C0"/>
<dbReference type="OMA" id="KDLHAPF"/>
<dbReference type="OrthoDB" id="5377312at2759"/>
<dbReference type="PhylomeDB" id="Q8R0C0"/>
<dbReference type="TreeFam" id="TF103052"/>
<dbReference type="Reactome" id="R-MMU-76061">
    <property type="pathway name" value="RNA Polymerase III Transcription Initiation From Type 1 Promoter"/>
</dbReference>
<dbReference type="Reactome" id="R-MMU-76066">
    <property type="pathway name" value="RNA Polymerase III Transcription Initiation From Type 2 Promoter"/>
</dbReference>
<dbReference type="Reactome" id="R-MMU-76071">
    <property type="pathway name" value="RNA Polymerase III Transcription Initiation From Type 3 Promoter"/>
</dbReference>
<dbReference type="BioGRID-ORCS" id="69870">
    <property type="hits" value="7 hits in 75 CRISPR screens"/>
</dbReference>
<dbReference type="ChiTaRS" id="Polr3gl">
    <property type="organism name" value="mouse"/>
</dbReference>
<dbReference type="PRO" id="PR:Q8R0C0"/>
<dbReference type="Proteomes" id="UP000000589">
    <property type="component" value="Chromosome 3"/>
</dbReference>
<dbReference type="RNAct" id="Q8R0C0">
    <property type="molecule type" value="protein"/>
</dbReference>
<dbReference type="Bgee" id="ENSMUSG00000028104">
    <property type="expression patterns" value="Expressed in retinal neural layer and 233 other cell types or tissues"/>
</dbReference>
<dbReference type="ExpressionAtlas" id="Q8R0C0">
    <property type="expression patterns" value="baseline and differential"/>
</dbReference>
<dbReference type="GO" id="GO:0005634">
    <property type="term" value="C:nucleus"/>
    <property type="evidence" value="ECO:0000266"/>
    <property type="project" value="MGI"/>
</dbReference>
<dbReference type="GO" id="GO:0005666">
    <property type="term" value="C:RNA polymerase III complex"/>
    <property type="evidence" value="ECO:0000266"/>
    <property type="project" value="MGI"/>
</dbReference>
<dbReference type="GO" id="GO:0003682">
    <property type="term" value="F:chromatin binding"/>
    <property type="evidence" value="ECO:0000314"/>
    <property type="project" value="MGI"/>
</dbReference>
<dbReference type="GO" id="GO:0006383">
    <property type="term" value="P:transcription by RNA polymerase III"/>
    <property type="evidence" value="ECO:0000250"/>
    <property type="project" value="UniProtKB"/>
</dbReference>
<dbReference type="InterPro" id="IPR024661">
    <property type="entry name" value="RNA_pol_III_Rpc31"/>
</dbReference>
<dbReference type="PANTHER" id="PTHR15367">
    <property type="entry name" value="DNA-DIRECTED RNA POLYMERASE III"/>
    <property type="match status" value="1"/>
</dbReference>
<dbReference type="PANTHER" id="PTHR15367:SF4">
    <property type="entry name" value="DNA-DIRECTED RNA POLYMERASE III SUBUNIT RPC7-LIKE"/>
    <property type="match status" value="1"/>
</dbReference>
<dbReference type="Pfam" id="PF11705">
    <property type="entry name" value="RNA_pol_3_Rpc31"/>
    <property type="match status" value="1"/>
</dbReference>
<dbReference type="PIRSF" id="PIRSF000777">
    <property type="entry name" value="RNA_polIII_C31"/>
    <property type="match status" value="1"/>
</dbReference>
<proteinExistence type="evidence at transcript level"/>
<evidence type="ECO:0000250" key="1"/>
<evidence type="ECO:0000250" key="2">
    <source>
        <dbReference type="UniProtKB" id="Q9BT43"/>
    </source>
</evidence>
<evidence type="ECO:0000256" key="3">
    <source>
        <dbReference type="SAM" id="MobiDB-lite"/>
    </source>
</evidence>
<evidence type="ECO:0000269" key="4">
    <source>
    </source>
</evidence>
<evidence type="ECO:0000305" key="5"/>
<evidence type="ECO:0000312" key="6">
    <source>
        <dbReference type="MGI" id="MGI:1917120"/>
    </source>
</evidence>
<gene>
    <name evidence="6" type="primary">Polr3gl</name>
</gene>
<reference key="1">
    <citation type="journal article" date="2005" name="Science">
        <title>The transcriptional landscape of the mammalian genome.</title>
        <authorList>
            <person name="Carninci P."/>
            <person name="Kasukawa T."/>
            <person name="Katayama S."/>
            <person name="Gough J."/>
            <person name="Frith M.C."/>
            <person name="Maeda N."/>
            <person name="Oyama R."/>
            <person name="Ravasi T."/>
            <person name="Lenhard B."/>
            <person name="Wells C."/>
            <person name="Kodzius R."/>
            <person name="Shimokawa K."/>
            <person name="Bajic V.B."/>
            <person name="Brenner S.E."/>
            <person name="Batalov S."/>
            <person name="Forrest A.R."/>
            <person name="Zavolan M."/>
            <person name="Davis M.J."/>
            <person name="Wilming L.G."/>
            <person name="Aidinis V."/>
            <person name="Allen J.E."/>
            <person name="Ambesi-Impiombato A."/>
            <person name="Apweiler R."/>
            <person name="Aturaliya R.N."/>
            <person name="Bailey T.L."/>
            <person name="Bansal M."/>
            <person name="Baxter L."/>
            <person name="Beisel K.W."/>
            <person name="Bersano T."/>
            <person name="Bono H."/>
            <person name="Chalk A.M."/>
            <person name="Chiu K.P."/>
            <person name="Choudhary V."/>
            <person name="Christoffels A."/>
            <person name="Clutterbuck D.R."/>
            <person name="Crowe M.L."/>
            <person name="Dalla E."/>
            <person name="Dalrymple B.P."/>
            <person name="de Bono B."/>
            <person name="Della Gatta G."/>
            <person name="di Bernardo D."/>
            <person name="Down T."/>
            <person name="Engstrom P."/>
            <person name="Fagiolini M."/>
            <person name="Faulkner G."/>
            <person name="Fletcher C.F."/>
            <person name="Fukushima T."/>
            <person name="Furuno M."/>
            <person name="Futaki S."/>
            <person name="Gariboldi M."/>
            <person name="Georgii-Hemming P."/>
            <person name="Gingeras T.R."/>
            <person name="Gojobori T."/>
            <person name="Green R.E."/>
            <person name="Gustincich S."/>
            <person name="Harbers M."/>
            <person name="Hayashi Y."/>
            <person name="Hensch T.K."/>
            <person name="Hirokawa N."/>
            <person name="Hill D."/>
            <person name="Huminiecki L."/>
            <person name="Iacono M."/>
            <person name="Ikeo K."/>
            <person name="Iwama A."/>
            <person name="Ishikawa T."/>
            <person name="Jakt M."/>
            <person name="Kanapin A."/>
            <person name="Katoh M."/>
            <person name="Kawasawa Y."/>
            <person name="Kelso J."/>
            <person name="Kitamura H."/>
            <person name="Kitano H."/>
            <person name="Kollias G."/>
            <person name="Krishnan S.P."/>
            <person name="Kruger A."/>
            <person name="Kummerfeld S.K."/>
            <person name="Kurochkin I.V."/>
            <person name="Lareau L.F."/>
            <person name="Lazarevic D."/>
            <person name="Lipovich L."/>
            <person name="Liu J."/>
            <person name="Liuni S."/>
            <person name="McWilliam S."/>
            <person name="Madan Babu M."/>
            <person name="Madera M."/>
            <person name="Marchionni L."/>
            <person name="Matsuda H."/>
            <person name="Matsuzawa S."/>
            <person name="Miki H."/>
            <person name="Mignone F."/>
            <person name="Miyake S."/>
            <person name="Morris K."/>
            <person name="Mottagui-Tabar S."/>
            <person name="Mulder N."/>
            <person name="Nakano N."/>
            <person name="Nakauchi H."/>
            <person name="Ng P."/>
            <person name="Nilsson R."/>
            <person name="Nishiguchi S."/>
            <person name="Nishikawa S."/>
            <person name="Nori F."/>
            <person name="Ohara O."/>
            <person name="Okazaki Y."/>
            <person name="Orlando V."/>
            <person name="Pang K.C."/>
            <person name="Pavan W.J."/>
            <person name="Pavesi G."/>
            <person name="Pesole G."/>
            <person name="Petrovsky N."/>
            <person name="Piazza S."/>
            <person name="Reed J."/>
            <person name="Reid J.F."/>
            <person name="Ring B.Z."/>
            <person name="Ringwald M."/>
            <person name="Rost B."/>
            <person name="Ruan Y."/>
            <person name="Salzberg S.L."/>
            <person name="Sandelin A."/>
            <person name="Schneider C."/>
            <person name="Schoenbach C."/>
            <person name="Sekiguchi K."/>
            <person name="Semple C.A."/>
            <person name="Seno S."/>
            <person name="Sessa L."/>
            <person name="Sheng Y."/>
            <person name="Shibata Y."/>
            <person name="Shimada H."/>
            <person name="Shimada K."/>
            <person name="Silva D."/>
            <person name="Sinclair B."/>
            <person name="Sperling S."/>
            <person name="Stupka E."/>
            <person name="Sugiura K."/>
            <person name="Sultana R."/>
            <person name="Takenaka Y."/>
            <person name="Taki K."/>
            <person name="Tammoja K."/>
            <person name="Tan S.L."/>
            <person name="Tang S."/>
            <person name="Taylor M.S."/>
            <person name="Tegner J."/>
            <person name="Teichmann S.A."/>
            <person name="Ueda H.R."/>
            <person name="van Nimwegen E."/>
            <person name="Verardo R."/>
            <person name="Wei C.L."/>
            <person name="Yagi K."/>
            <person name="Yamanishi H."/>
            <person name="Zabarovsky E."/>
            <person name="Zhu S."/>
            <person name="Zimmer A."/>
            <person name="Hide W."/>
            <person name="Bult C."/>
            <person name="Grimmond S.M."/>
            <person name="Teasdale R.D."/>
            <person name="Liu E.T."/>
            <person name="Brusic V."/>
            <person name="Quackenbush J."/>
            <person name="Wahlestedt C."/>
            <person name="Mattick J.S."/>
            <person name="Hume D.A."/>
            <person name="Kai C."/>
            <person name="Sasaki D."/>
            <person name="Tomaru Y."/>
            <person name="Fukuda S."/>
            <person name="Kanamori-Katayama M."/>
            <person name="Suzuki M."/>
            <person name="Aoki J."/>
            <person name="Arakawa T."/>
            <person name="Iida J."/>
            <person name="Imamura K."/>
            <person name="Itoh M."/>
            <person name="Kato T."/>
            <person name="Kawaji H."/>
            <person name="Kawagashira N."/>
            <person name="Kawashima T."/>
            <person name="Kojima M."/>
            <person name="Kondo S."/>
            <person name="Konno H."/>
            <person name="Nakano K."/>
            <person name="Ninomiya N."/>
            <person name="Nishio T."/>
            <person name="Okada M."/>
            <person name="Plessy C."/>
            <person name="Shibata K."/>
            <person name="Shiraki T."/>
            <person name="Suzuki S."/>
            <person name="Tagami M."/>
            <person name="Waki K."/>
            <person name="Watahiki A."/>
            <person name="Okamura-Oho Y."/>
            <person name="Suzuki H."/>
            <person name="Kawai J."/>
            <person name="Hayashizaki Y."/>
        </authorList>
    </citation>
    <scope>NUCLEOTIDE SEQUENCE [LARGE SCALE MRNA]</scope>
    <source>
        <strain>C57BL/6J</strain>
        <tissue>Small intestine</tissue>
    </source>
</reference>
<reference key="2">
    <citation type="journal article" date="2004" name="Genome Res.">
        <title>The status, quality, and expansion of the NIH full-length cDNA project: the Mammalian Gene Collection (MGC).</title>
        <authorList>
            <consortium name="The MGC Project Team"/>
        </authorList>
    </citation>
    <scope>NUCLEOTIDE SEQUENCE [LARGE SCALE MRNA]</scope>
    <source>
        <tissue>Eye</tissue>
    </source>
</reference>
<reference key="3">
    <citation type="journal article" date="2014" name="Genome Res.">
        <title>Gene duplication and neofunctionalization: POLR3G and POLR3GL.</title>
        <authorList>
            <person name="Renaud M."/>
            <person name="Praz V."/>
            <person name="Vieu E."/>
            <person name="Florens L."/>
            <person name="Washburn M.P."/>
            <person name="l'Hote P."/>
            <person name="Hernandez N."/>
        </authorList>
    </citation>
    <scope>TISSUE SPECIFICITY</scope>
</reference>
<accession>Q8R0C0</accession>
<accession>Q9D8G0</accession>
<feature type="chain" id="PRO_0000311591" description="DNA-directed RNA polymerase III subunit RPC7-like">
    <location>
        <begin position="1"/>
        <end position="218"/>
    </location>
</feature>
<feature type="region of interest" description="Disordered" evidence="3">
    <location>
        <begin position="130"/>
        <end position="218"/>
    </location>
</feature>
<feature type="compositionally biased region" description="Basic and acidic residues" evidence="3">
    <location>
        <begin position="139"/>
        <end position="160"/>
    </location>
</feature>
<feature type="compositionally biased region" description="Acidic residues" evidence="3">
    <location>
        <begin position="161"/>
        <end position="193"/>
    </location>
</feature>
<feature type="compositionally biased region" description="Acidic residues" evidence="3">
    <location>
        <begin position="201"/>
        <end position="218"/>
    </location>
</feature>
<feature type="sequence conflict" description="In Ref. 1; BAB25439." evidence="5" ref="1">
    <original>P</original>
    <variation>S</variation>
    <location>
        <position position="83"/>
    </location>
</feature>
<feature type="sequence conflict" description="In Ref. 1; BAB25439." evidence="5" ref="1">
    <original>P</original>
    <variation>S</variation>
    <location>
        <position position="114"/>
    </location>
</feature>
<feature type="sequence conflict" description="In Ref. 1; BAB25439." evidence="5" ref="1">
    <original>E</original>
    <variation>G</variation>
    <location>
        <position position="176"/>
    </location>
</feature>
<feature type="sequence conflict" description="In Ref. 1; BAB25439." evidence="5" ref="1">
    <original>E</original>
    <variation>G</variation>
    <location>
        <position position="180"/>
    </location>
</feature>
<sequence length="218" mass="25136">MASRGGGRGRGRGQLTFNMEAVGIGKGDALPPPTLQPSPLFPPLEFHPVPLPAGEEGEYVLALKQELRGAMRQLPYFIRPAVPKRDVERYSDKYQMSGPIDNAIDWNPDWRRLPSELKIRVRKVQKERTTIILPKRPPKSTDDKEETIQKLETLEKKEEEVTSEEDEEKEEEEEKEEGEEEEYDEEEHEEETDYIMSYFDNGEDFGGDSDDNMDEAIY</sequence>
<keyword id="KW-0539">Nucleus</keyword>
<keyword id="KW-1185">Reference proteome</keyword>
<name>RPC7L_MOUSE</name>